<accession>Q5HA25</accession>
<accession>Q5FEV0</accession>
<name>NDK_EHRRW</name>
<dbReference type="EC" id="2.7.4.6" evidence="1"/>
<dbReference type="EMBL" id="CR767821">
    <property type="protein sequence ID" value="CAH58592.1"/>
    <property type="molecule type" value="Genomic_DNA"/>
</dbReference>
<dbReference type="EMBL" id="CR925678">
    <property type="protein sequence ID" value="CAI27402.1"/>
    <property type="molecule type" value="Genomic_DNA"/>
</dbReference>
<dbReference type="RefSeq" id="WP_011155535.1">
    <property type="nucleotide sequence ID" value="NC_005295.2"/>
</dbReference>
<dbReference type="SMR" id="Q5HA25"/>
<dbReference type="GeneID" id="33058034"/>
<dbReference type="KEGG" id="eru:Erum8570"/>
<dbReference type="KEGG" id="erw:ERWE_CDS_09080"/>
<dbReference type="eggNOG" id="COG0105">
    <property type="taxonomic scope" value="Bacteria"/>
</dbReference>
<dbReference type="HOGENOM" id="CLU_060216_8_1_5"/>
<dbReference type="Proteomes" id="UP000001021">
    <property type="component" value="Chromosome"/>
</dbReference>
<dbReference type="GO" id="GO:0005737">
    <property type="term" value="C:cytoplasm"/>
    <property type="evidence" value="ECO:0007669"/>
    <property type="project" value="UniProtKB-SubCell"/>
</dbReference>
<dbReference type="GO" id="GO:0005524">
    <property type="term" value="F:ATP binding"/>
    <property type="evidence" value="ECO:0007669"/>
    <property type="project" value="UniProtKB-UniRule"/>
</dbReference>
<dbReference type="GO" id="GO:0046872">
    <property type="term" value="F:metal ion binding"/>
    <property type="evidence" value="ECO:0007669"/>
    <property type="project" value="UniProtKB-KW"/>
</dbReference>
<dbReference type="GO" id="GO:0004550">
    <property type="term" value="F:nucleoside diphosphate kinase activity"/>
    <property type="evidence" value="ECO:0007669"/>
    <property type="project" value="UniProtKB-UniRule"/>
</dbReference>
<dbReference type="GO" id="GO:0006241">
    <property type="term" value="P:CTP biosynthetic process"/>
    <property type="evidence" value="ECO:0007669"/>
    <property type="project" value="UniProtKB-UniRule"/>
</dbReference>
<dbReference type="GO" id="GO:0006183">
    <property type="term" value="P:GTP biosynthetic process"/>
    <property type="evidence" value="ECO:0007669"/>
    <property type="project" value="UniProtKB-UniRule"/>
</dbReference>
<dbReference type="GO" id="GO:0006228">
    <property type="term" value="P:UTP biosynthetic process"/>
    <property type="evidence" value="ECO:0007669"/>
    <property type="project" value="UniProtKB-UniRule"/>
</dbReference>
<dbReference type="CDD" id="cd04413">
    <property type="entry name" value="NDPk_I"/>
    <property type="match status" value="1"/>
</dbReference>
<dbReference type="FunFam" id="3.30.70.141:FF:000003">
    <property type="entry name" value="Nucleoside diphosphate kinase"/>
    <property type="match status" value="1"/>
</dbReference>
<dbReference type="Gene3D" id="3.30.70.141">
    <property type="entry name" value="Nucleoside diphosphate kinase-like domain"/>
    <property type="match status" value="1"/>
</dbReference>
<dbReference type="HAMAP" id="MF_00451">
    <property type="entry name" value="NDP_kinase"/>
    <property type="match status" value="1"/>
</dbReference>
<dbReference type="InterPro" id="IPR034907">
    <property type="entry name" value="NDK-like_dom"/>
</dbReference>
<dbReference type="InterPro" id="IPR036850">
    <property type="entry name" value="NDK-like_dom_sf"/>
</dbReference>
<dbReference type="InterPro" id="IPR001564">
    <property type="entry name" value="Nucleoside_diP_kinase"/>
</dbReference>
<dbReference type="InterPro" id="IPR023005">
    <property type="entry name" value="Nucleoside_diP_kinase_AS"/>
</dbReference>
<dbReference type="NCBIfam" id="NF001908">
    <property type="entry name" value="PRK00668.1"/>
    <property type="match status" value="1"/>
</dbReference>
<dbReference type="PANTHER" id="PTHR46161">
    <property type="entry name" value="NUCLEOSIDE DIPHOSPHATE KINASE"/>
    <property type="match status" value="1"/>
</dbReference>
<dbReference type="PANTHER" id="PTHR46161:SF3">
    <property type="entry name" value="NUCLEOSIDE DIPHOSPHATE KINASE DDB_G0292928-RELATED"/>
    <property type="match status" value="1"/>
</dbReference>
<dbReference type="Pfam" id="PF00334">
    <property type="entry name" value="NDK"/>
    <property type="match status" value="1"/>
</dbReference>
<dbReference type="PRINTS" id="PR01243">
    <property type="entry name" value="NUCDPKINASE"/>
</dbReference>
<dbReference type="SMART" id="SM00562">
    <property type="entry name" value="NDK"/>
    <property type="match status" value="1"/>
</dbReference>
<dbReference type="SUPFAM" id="SSF54919">
    <property type="entry name" value="Nucleoside diphosphate kinase, NDK"/>
    <property type="match status" value="1"/>
</dbReference>
<dbReference type="PROSITE" id="PS00469">
    <property type="entry name" value="NDPK"/>
    <property type="match status" value="1"/>
</dbReference>
<dbReference type="PROSITE" id="PS51374">
    <property type="entry name" value="NDPK_LIKE"/>
    <property type="match status" value="1"/>
</dbReference>
<sequence>MLERTLSILKPDVVKRNIAGQVNSYIENSGLKIIIQKMCLLTRYQAEKFYEIHKSQVFFVPLINFMISGPVVVQVLEGENAISLYREIMGATDPKKANSGTIRGDFAENIDANCVHGSDSLENAIREIRFFFSEYELLSLYEC</sequence>
<organism>
    <name type="scientific">Ehrlichia ruminantium (strain Welgevonden)</name>
    <dbReference type="NCBI Taxonomy" id="254945"/>
    <lineage>
        <taxon>Bacteria</taxon>
        <taxon>Pseudomonadati</taxon>
        <taxon>Pseudomonadota</taxon>
        <taxon>Alphaproteobacteria</taxon>
        <taxon>Rickettsiales</taxon>
        <taxon>Anaplasmataceae</taxon>
        <taxon>Ehrlichia</taxon>
    </lineage>
</organism>
<protein>
    <recommendedName>
        <fullName evidence="1">Nucleoside diphosphate kinase</fullName>
        <shortName evidence="1">NDK</shortName>
        <shortName evidence="1">NDP kinase</shortName>
        <ecNumber evidence="1">2.7.4.6</ecNumber>
    </recommendedName>
    <alternativeName>
        <fullName evidence="1">Nucleoside-2-P kinase</fullName>
    </alternativeName>
</protein>
<reference key="1">
    <citation type="journal article" date="2005" name="Proc. Natl. Acad. Sci. U.S.A.">
        <title>The genome of the heartwater agent Ehrlichia ruminantium contains multiple tandem repeats of actively variable copy number.</title>
        <authorList>
            <person name="Collins N.E."/>
            <person name="Liebenberg J."/>
            <person name="de Villiers E.P."/>
            <person name="Brayton K.A."/>
            <person name="Louw E."/>
            <person name="Pretorius A."/>
            <person name="Faber F.E."/>
            <person name="van Heerden H."/>
            <person name="Josemans A."/>
            <person name="van Kleef M."/>
            <person name="Steyn H.C."/>
            <person name="van Strijp M.F."/>
            <person name="Zweygarth E."/>
            <person name="Jongejan F."/>
            <person name="Maillard J.C."/>
            <person name="Berthier D."/>
            <person name="Botha M."/>
            <person name="Joubert F."/>
            <person name="Corton C.H."/>
            <person name="Thomson N.R."/>
            <person name="Allsopp M.T."/>
            <person name="Allsopp B.A."/>
        </authorList>
    </citation>
    <scope>NUCLEOTIDE SEQUENCE [LARGE SCALE GENOMIC DNA]</scope>
    <source>
        <strain>Welgevonden</strain>
    </source>
</reference>
<reference key="2">
    <citation type="journal article" date="2006" name="J. Bacteriol.">
        <title>Comparative genomic analysis of three strains of Ehrlichia ruminantium reveals an active process of genome size plasticity.</title>
        <authorList>
            <person name="Frutos R."/>
            <person name="Viari A."/>
            <person name="Ferraz C."/>
            <person name="Morgat A."/>
            <person name="Eychenie S."/>
            <person name="Kandassamy Y."/>
            <person name="Chantal I."/>
            <person name="Bensaid A."/>
            <person name="Coissac E."/>
            <person name="Vachiery N."/>
            <person name="Demaille J."/>
            <person name="Martinez D."/>
        </authorList>
    </citation>
    <scope>NUCLEOTIDE SEQUENCE [LARGE SCALE GENOMIC DNA]</scope>
    <source>
        <strain>Welgevonden</strain>
    </source>
</reference>
<comment type="function">
    <text evidence="1">Major role in the synthesis of nucleoside triphosphates other than ATP. The ATP gamma phosphate is transferred to the NDP beta phosphate via a ping-pong mechanism, using a phosphorylated active-site intermediate.</text>
</comment>
<comment type="catalytic activity">
    <reaction evidence="1">
        <text>a 2'-deoxyribonucleoside 5'-diphosphate + ATP = a 2'-deoxyribonucleoside 5'-triphosphate + ADP</text>
        <dbReference type="Rhea" id="RHEA:44640"/>
        <dbReference type="ChEBI" id="CHEBI:30616"/>
        <dbReference type="ChEBI" id="CHEBI:61560"/>
        <dbReference type="ChEBI" id="CHEBI:73316"/>
        <dbReference type="ChEBI" id="CHEBI:456216"/>
        <dbReference type="EC" id="2.7.4.6"/>
    </reaction>
</comment>
<comment type="catalytic activity">
    <reaction evidence="1">
        <text>a ribonucleoside 5'-diphosphate + ATP = a ribonucleoside 5'-triphosphate + ADP</text>
        <dbReference type="Rhea" id="RHEA:18113"/>
        <dbReference type="ChEBI" id="CHEBI:30616"/>
        <dbReference type="ChEBI" id="CHEBI:57930"/>
        <dbReference type="ChEBI" id="CHEBI:61557"/>
        <dbReference type="ChEBI" id="CHEBI:456216"/>
        <dbReference type="EC" id="2.7.4.6"/>
    </reaction>
</comment>
<comment type="cofactor">
    <cofactor evidence="1">
        <name>Mg(2+)</name>
        <dbReference type="ChEBI" id="CHEBI:18420"/>
    </cofactor>
</comment>
<comment type="subunit">
    <text evidence="1">Homotetramer.</text>
</comment>
<comment type="subcellular location">
    <subcellularLocation>
        <location evidence="1">Cytoplasm</location>
    </subcellularLocation>
</comment>
<comment type="similarity">
    <text evidence="1">Belongs to the NDK family.</text>
</comment>
<gene>
    <name evidence="1" type="primary">ndk</name>
    <name type="ordered locus">Erum8570</name>
    <name type="ordered locus">ERWE_CDS_09080</name>
</gene>
<keyword id="KW-0067">ATP-binding</keyword>
<keyword id="KW-0963">Cytoplasm</keyword>
<keyword id="KW-0418">Kinase</keyword>
<keyword id="KW-0460">Magnesium</keyword>
<keyword id="KW-0479">Metal-binding</keyword>
<keyword id="KW-0546">Nucleotide metabolism</keyword>
<keyword id="KW-0547">Nucleotide-binding</keyword>
<keyword id="KW-0597">Phosphoprotein</keyword>
<keyword id="KW-0808">Transferase</keyword>
<feature type="chain" id="PRO_0000136982" description="Nucleoside diphosphate kinase">
    <location>
        <begin position="1"/>
        <end position="143"/>
    </location>
</feature>
<feature type="active site" description="Pros-phosphohistidine intermediate" evidence="1">
    <location>
        <position position="116"/>
    </location>
</feature>
<feature type="binding site" evidence="1">
    <location>
        <position position="10"/>
    </location>
    <ligand>
        <name>ATP</name>
        <dbReference type="ChEBI" id="CHEBI:30616"/>
    </ligand>
</feature>
<feature type="binding site" evidence="1">
    <location>
        <position position="58"/>
    </location>
    <ligand>
        <name>ATP</name>
        <dbReference type="ChEBI" id="CHEBI:30616"/>
    </ligand>
</feature>
<feature type="binding site" evidence="1">
    <location>
        <position position="86"/>
    </location>
    <ligand>
        <name>ATP</name>
        <dbReference type="ChEBI" id="CHEBI:30616"/>
    </ligand>
</feature>
<feature type="binding site" evidence="1">
    <location>
        <position position="92"/>
    </location>
    <ligand>
        <name>ATP</name>
        <dbReference type="ChEBI" id="CHEBI:30616"/>
    </ligand>
</feature>
<feature type="binding site" evidence="1">
    <location>
        <position position="103"/>
    </location>
    <ligand>
        <name>ATP</name>
        <dbReference type="ChEBI" id="CHEBI:30616"/>
    </ligand>
</feature>
<feature type="binding site" evidence="1">
    <location>
        <position position="113"/>
    </location>
    <ligand>
        <name>ATP</name>
        <dbReference type="ChEBI" id="CHEBI:30616"/>
    </ligand>
</feature>
<evidence type="ECO:0000255" key="1">
    <source>
        <dbReference type="HAMAP-Rule" id="MF_00451"/>
    </source>
</evidence>
<proteinExistence type="inferred from homology"/>